<evidence type="ECO:0000250" key="1"/>
<evidence type="ECO:0000250" key="2">
    <source>
        <dbReference type="UniProtKB" id="P00157"/>
    </source>
</evidence>
<evidence type="ECO:0000255" key="3">
    <source>
        <dbReference type="PROSITE-ProRule" id="PRU00967"/>
    </source>
</evidence>
<evidence type="ECO:0000255" key="4">
    <source>
        <dbReference type="PROSITE-ProRule" id="PRU00968"/>
    </source>
</evidence>
<evidence type="ECO:0000305" key="5"/>
<sequence>MTNIRKTHPLMKIVNNAFIDLPAPSNISSWWNFGSLLGICLILQILTGLFLAMHYTSDTMTAFSSVTHICRDVNYGWIIRYMHANGASMFFICLFMHVGRGLYYGSYTFLETWNIGVILLFTVMATAFVGYVLPWGQMSFWGATVITNLLSAIPYIGTNLVEWIWGGFSVDKATLTRFFAFHFILPFIIAALAMVHLLFLHETGSNNPTGIPSDADKIPFHPYYTIKDILGALLLTLFLMLLVLFAPDLLGDPDNYTPANPLNTPPHIKPECYFLFAYAILRSIPNKLGGVLALVLSILILVLMPLLHTSKQRSMMFRPFSQCLFWILVAHLLTLTWIGGQPVEHPFIIIGQLASILYFLIILVLMPVTSTIENNLLKW</sequence>
<proteinExistence type="inferred from homology"/>
<accession>P24960</accession>
<accession>P92875</accession>
<accession>P92885</accession>
<accession>Q35255</accession>
<geneLocation type="mitochondrion"/>
<reference key="1">
    <citation type="journal article" date="1991" name="J. Mol. Evol.">
        <title>Evolution of the cytochrome b gene of mammals.</title>
        <authorList>
            <person name="Irwin D.M."/>
            <person name="Kocher T.D."/>
            <person name="Wilson A.C."/>
        </authorList>
    </citation>
    <scope>NUCLEOTIDE SEQUENCE [GENOMIC DNA]</scope>
</reference>
<reference key="2">
    <citation type="submission" date="1992-09" db="EMBL/GenBank/DDBJ databases">
        <authorList>
            <person name="Hughes G.A."/>
            <person name="Carr S.M."/>
        </authorList>
    </citation>
    <scope>NUCLEOTIDE SEQUENCE [GENOMIC DNA] OF 33-134</scope>
    <source>
        <tissue>Heart</tissue>
    </source>
</reference>
<reference key="3">
    <citation type="submission" date="1992-08" db="EMBL/GenBank/DDBJ databases">
        <authorList>
            <person name="Carr S.M."/>
            <person name="Hughes G.A."/>
        </authorList>
    </citation>
    <scope>NUCLEOTIDE SEQUENCE [GENOMIC DNA] OF 33-130</scope>
</reference>
<organism>
    <name type="scientific">Odocoileus hemionus</name>
    <name type="common">Mule deer</name>
    <name type="synonym">Cervus hemionus</name>
    <dbReference type="NCBI Taxonomy" id="9872"/>
    <lineage>
        <taxon>Eukaryota</taxon>
        <taxon>Metazoa</taxon>
        <taxon>Chordata</taxon>
        <taxon>Craniata</taxon>
        <taxon>Vertebrata</taxon>
        <taxon>Euteleostomi</taxon>
        <taxon>Mammalia</taxon>
        <taxon>Eutheria</taxon>
        <taxon>Laurasiatheria</taxon>
        <taxon>Artiodactyla</taxon>
        <taxon>Ruminantia</taxon>
        <taxon>Pecora</taxon>
        <taxon>Cervidae</taxon>
        <taxon>Odocoileinae</taxon>
        <taxon>Odocoileus</taxon>
    </lineage>
</organism>
<gene>
    <name type="primary">MT-CYB</name>
    <name type="synonym">COB</name>
    <name type="synonym">CYTB</name>
    <name type="synonym">MTCYB</name>
</gene>
<feature type="chain" id="PRO_0000061312" description="Cytochrome b">
    <location>
        <begin position="1"/>
        <end position="379"/>
    </location>
</feature>
<feature type="transmembrane region" description="Helical" evidence="2">
    <location>
        <begin position="33"/>
        <end position="53"/>
    </location>
</feature>
<feature type="transmembrane region" description="Helical" evidence="2">
    <location>
        <begin position="77"/>
        <end position="98"/>
    </location>
</feature>
<feature type="transmembrane region" description="Helical" evidence="2">
    <location>
        <begin position="113"/>
        <end position="133"/>
    </location>
</feature>
<feature type="transmembrane region" description="Helical" evidence="2">
    <location>
        <begin position="178"/>
        <end position="198"/>
    </location>
</feature>
<feature type="transmembrane region" description="Helical" evidence="2">
    <location>
        <begin position="226"/>
        <end position="246"/>
    </location>
</feature>
<feature type="transmembrane region" description="Helical" evidence="2">
    <location>
        <begin position="288"/>
        <end position="308"/>
    </location>
</feature>
<feature type="transmembrane region" description="Helical" evidence="2">
    <location>
        <begin position="320"/>
        <end position="340"/>
    </location>
</feature>
<feature type="transmembrane region" description="Helical" evidence="2">
    <location>
        <begin position="347"/>
        <end position="367"/>
    </location>
</feature>
<feature type="binding site" description="axial binding residue" evidence="2">
    <location>
        <position position="83"/>
    </location>
    <ligand>
        <name>heme b</name>
        <dbReference type="ChEBI" id="CHEBI:60344"/>
        <label>b562</label>
    </ligand>
    <ligandPart>
        <name>Fe</name>
        <dbReference type="ChEBI" id="CHEBI:18248"/>
    </ligandPart>
</feature>
<feature type="binding site" description="axial binding residue" evidence="2">
    <location>
        <position position="97"/>
    </location>
    <ligand>
        <name>heme b</name>
        <dbReference type="ChEBI" id="CHEBI:60344"/>
        <label>b566</label>
    </ligand>
    <ligandPart>
        <name>Fe</name>
        <dbReference type="ChEBI" id="CHEBI:18248"/>
    </ligandPart>
</feature>
<feature type="binding site" description="axial binding residue" evidence="2">
    <location>
        <position position="182"/>
    </location>
    <ligand>
        <name>heme b</name>
        <dbReference type="ChEBI" id="CHEBI:60344"/>
        <label>b562</label>
    </ligand>
    <ligandPart>
        <name>Fe</name>
        <dbReference type="ChEBI" id="CHEBI:18248"/>
    </ligandPart>
</feature>
<feature type="binding site" description="axial binding residue" evidence="2">
    <location>
        <position position="196"/>
    </location>
    <ligand>
        <name>heme b</name>
        <dbReference type="ChEBI" id="CHEBI:60344"/>
        <label>b566</label>
    </ligand>
    <ligandPart>
        <name>Fe</name>
        <dbReference type="ChEBI" id="CHEBI:18248"/>
    </ligandPart>
</feature>
<feature type="binding site" evidence="2">
    <location>
        <position position="201"/>
    </location>
    <ligand>
        <name>a ubiquinone</name>
        <dbReference type="ChEBI" id="CHEBI:16389"/>
    </ligand>
</feature>
<feature type="sequence conflict" description="In Ref. 2; AAA31973." evidence="5" ref="2">
    <original>I</original>
    <variation>V</variation>
    <location>
        <position position="39"/>
    </location>
</feature>
<protein>
    <recommendedName>
        <fullName>Cytochrome b</fullName>
    </recommendedName>
    <alternativeName>
        <fullName>Complex III subunit 3</fullName>
    </alternativeName>
    <alternativeName>
        <fullName>Complex III subunit III</fullName>
    </alternativeName>
    <alternativeName>
        <fullName>Cytochrome b-c1 complex subunit 3</fullName>
    </alternativeName>
    <alternativeName>
        <fullName>Ubiquinol-cytochrome-c reductase complex cytochrome b subunit</fullName>
    </alternativeName>
</protein>
<dbReference type="EMBL" id="X56291">
    <property type="protein sequence ID" value="CAA39738.1"/>
    <property type="molecule type" value="Genomic_DNA"/>
</dbReference>
<dbReference type="EMBL" id="L01543">
    <property type="protein sequence ID" value="AAA72282.1"/>
    <property type="molecule type" value="Genomic_DNA"/>
</dbReference>
<dbReference type="EMBL" id="L01544">
    <property type="protein sequence ID" value="AAA72283.1"/>
    <property type="molecule type" value="Genomic_DNA"/>
</dbReference>
<dbReference type="EMBL" id="L01547">
    <property type="protein sequence ID" value="AAA72285.1"/>
    <property type="molecule type" value="Genomic_DNA"/>
</dbReference>
<dbReference type="EMBL" id="M98485">
    <property type="protein sequence ID" value="AAA31973.2"/>
    <property type="status" value="ALT_SEQ"/>
    <property type="molecule type" value="Genomic_DNA"/>
</dbReference>
<dbReference type="EMBL" id="M98486">
    <property type="protein sequence ID" value="AAA31977.2"/>
    <property type="status" value="ALT_SEQ"/>
    <property type="molecule type" value="Genomic_DNA"/>
</dbReference>
<dbReference type="EMBL" id="M98487">
    <property type="protein sequence ID" value="AAA31981.2"/>
    <property type="status" value="ALT_SEQ"/>
    <property type="molecule type" value="Genomic_DNA"/>
</dbReference>
<dbReference type="EMBL" id="M98488">
    <property type="protein sequence ID" value="AAA31980.2"/>
    <property type="status" value="ALT_SEQ"/>
    <property type="molecule type" value="Genomic_DNA"/>
</dbReference>
<dbReference type="EMBL" id="M98489">
    <property type="protein sequence ID" value="AAA31979.1"/>
    <property type="status" value="ALT_SEQ"/>
    <property type="molecule type" value="Genomic_DNA"/>
</dbReference>
<dbReference type="EMBL" id="M98490">
    <property type="protein sequence ID" value="AAA31974.2"/>
    <property type="status" value="ALT_SEQ"/>
    <property type="molecule type" value="Genomic_DNA"/>
</dbReference>
<dbReference type="PIR" id="S17414">
    <property type="entry name" value="S17414"/>
</dbReference>
<dbReference type="SMR" id="P24960"/>
<dbReference type="GO" id="GO:0005743">
    <property type="term" value="C:mitochondrial inner membrane"/>
    <property type="evidence" value="ECO:0007669"/>
    <property type="project" value="UniProtKB-SubCell"/>
</dbReference>
<dbReference type="GO" id="GO:0045275">
    <property type="term" value="C:respiratory chain complex III"/>
    <property type="evidence" value="ECO:0007669"/>
    <property type="project" value="InterPro"/>
</dbReference>
<dbReference type="GO" id="GO:0046872">
    <property type="term" value="F:metal ion binding"/>
    <property type="evidence" value="ECO:0007669"/>
    <property type="project" value="UniProtKB-KW"/>
</dbReference>
<dbReference type="GO" id="GO:0008121">
    <property type="term" value="F:ubiquinol-cytochrome-c reductase activity"/>
    <property type="evidence" value="ECO:0007669"/>
    <property type="project" value="InterPro"/>
</dbReference>
<dbReference type="GO" id="GO:0006122">
    <property type="term" value="P:mitochondrial electron transport, ubiquinol to cytochrome c"/>
    <property type="evidence" value="ECO:0007669"/>
    <property type="project" value="TreeGrafter"/>
</dbReference>
<dbReference type="CDD" id="cd00290">
    <property type="entry name" value="cytochrome_b_C"/>
    <property type="match status" value="1"/>
</dbReference>
<dbReference type="CDD" id="cd00284">
    <property type="entry name" value="Cytochrome_b_N"/>
    <property type="match status" value="1"/>
</dbReference>
<dbReference type="FunFam" id="1.20.810.10:FF:000002">
    <property type="entry name" value="Cytochrome b"/>
    <property type="match status" value="1"/>
</dbReference>
<dbReference type="Gene3D" id="1.20.810.10">
    <property type="entry name" value="Cytochrome Bc1 Complex, Chain C"/>
    <property type="match status" value="1"/>
</dbReference>
<dbReference type="InterPro" id="IPR005798">
    <property type="entry name" value="Cyt_b/b6_C"/>
</dbReference>
<dbReference type="InterPro" id="IPR036150">
    <property type="entry name" value="Cyt_b/b6_C_sf"/>
</dbReference>
<dbReference type="InterPro" id="IPR005797">
    <property type="entry name" value="Cyt_b/b6_N"/>
</dbReference>
<dbReference type="InterPro" id="IPR027387">
    <property type="entry name" value="Cytb/b6-like_sf"/>
</dbReference>
<dbReference type="InterPro" id="IPR030689">
    <property type="entry name" value="Cytochrome_b"/>
</dbReference>
<dbReference type="InterPro" id="IPR048260">
    <property type="entry name" value="Cytochrome_b_C_euk/bac"/>
</dbReference>
<dbReference type="InterPro" id="IPR048259">
    <property type="entry name" value="Cytochrome_b_N_euk/bac"/>
</dbReference>
<dbReference type="InterPro" id="IPR016174">
    <property type="entry name" value="Di-haem_cyt_TM"/>
</dbReference>
<dbReference type="PANTHER" id="PTHR19271">
    <property type="entry name" value="CYTOCHROME B"/>
    <property type="match status" value="1"/>
</dbReference>
<dbReference type="PANTHER" id="PTHR19271:SF16">
    <property type="entry name" value="CYTOCHROME B"/>
    <property type="match status" value="1"/>
</dbReference>
<dbReference type="Pfam" id="PF00032">
    <property type="entry name" value="Cytochrom_B_C"/>
    <property type="match status" value="1"/>
</dbReference>
<dbReference type="Pfam" id="PF00033">
    <property type="entry name" value="Cytochrome_B"/>
    <property type="match status" value="1"/>
</dbReference>
<dbReference type="PIRSF" id="PIRSF038885">
    <property type="entry name" value="COB"/>
    <property type="match status" value="1"/>
</dbReference>
<dbReference type="SUPFAM" id="SSF81648">
    <property type="entry name" value="a domain/subunit of cytochrome bc1 complex (Ubiquinol-cytochrome c reductase)"/>
    <property type="match status" value="1"/>
</dbReference>
<dbReference type="SUPFAM" id="SSF81342">
    <property type="entry name" value="Transmembrane di-heme cytochromes"/>
    <property type="match status" value="1"/>
</dbReference>
<dbReference type="PROSITE" id="PS51003">
    <property type="entry name" value="CYTB_CTER"/>
    <property type="match status" value="1"/>
</dbReference>
<dbReference type="PROSITE" id="PS51002">
    <property type="entry name" value="CYTB_NTER"/>
    <property type="match status" value="1"/>
</dbReference>
<keyword id="KW-0249">Electron transport</keyword>
<keyword id="KW-0349">Heme</keyword>
<keyword id="KW-0408">Iron</keyword>
<keyword id="KW-0472">Membrane</keyword>
<keyword id="KW-0479">Metal-binding</keyword>
<keyword id="KW-0496">Mitochondrion</keyword>
<keyword id="KW-0999">Mitochondrion inner membrane</keyword>
<keyword id="KW-0679">Respiratory chain</keyword>
<keyword id="KW-0812">Transmembrane</keyword>
<keyword id="KW-1133">Transmembrane helix</keyword>
<keyword id="KW-0813">Transport</keyword>
<keyword id="KW-0830">Ubiquinone</keyword>
<name>CYB_ODOHE</name>
<comment type="function">
    <text evidence="2">Component of the ubiquinol-cytochrome c reductase complex (complex III or cytochrome b-c1 complex) that is part of the mitochondrial respiratory chain. The b-c1 complex mediates electron transfer from ubiquinol to cytochrome c. Contributes to the generation of a proton gradient across the mitochondrial membrane that is then used for ATP synthesis.</text>
</comment>
<comment type="cofactor">
    <cofactor evidence="2">
        <name>heme b</name>
        <dbReference type="ChEBI" id="CHEBI:60344"/>
    </cofactor>
    <text evidence="2">Binds 2 heme b groups non-covalently.</text>
</comment>
<comment type="subunit">
    <text evidence="2">The cytochrome bc1 complex contains 11 subunits: 3 respiratory subunits (MT-CYB, CYC1 and UQCRFS1), 2 core proteins (UQCRC1 and UQCRC2) and 6 low-molecular weight proteins (UQCRH/QCR6, UQCRB/QCR7, UQCRQ/QCR8, UQCR10/QCR9, UQCR11/QCR10 and a cleavage product of UQCRFS1). This cytochrome bc1 complex then forms a dimer.</text>
</comment>
<comment type="subcellular location">
    <subcellularLocation>
        <location evidence="2">Mitochondrion inner membrane</location>
        <topology evidence="2">Multi-pass membrane protein</topology>
    </subcellularLocation>
</comment>
<comment type="miscellaneous">
    <text evidence="1">Heme 1 (or BL or b562) is low-potential and absorbs at about 562 nm, and heme 2 (or BH or b566) is high-potential and absorbs at about 566 nm.</text>
</comment>
<comment type="similarity">
    <text evidence="3 4">Belongs to the cytochrome b family.</text>
</comment>
<comment type="caution">
    <text evidence="2">The full-length protein contains only eight transmembrane helices, not nine as predicted by bioinformatics tools.</text>
</comment>